<keyword id="KW-0030">Aminoacyl-tRNA synthetase</keyword>
<keyword id="KW-0067">ATP-binding</keyword>
<keyword id="KW-0963">Cytoplasm</keyword>
<keyword id="KW-0436">Ligase</keyword>
<keyword id="KW-0479">Metal-binding</keyword>
<keyword id="KW-0547">Nucleotide-binding</keyword>
<keyword id="KW-0648">Protein biosynthesis</keyword>
<keyword id="KW-0862">Zinc</keyword>
<evidence type="ECO:0000255" key="1">
    <source>
        <dbReference type="HAMAP-Rule" id="MF_02002"/>
    </source>
</evidence>
<gene>
    <name evidence="1" type="primary">ileS</name>
    <name type="ordered locus">SG0414</name>
</gene>
<feature type="chain" id="PRO_1000022126" description="Isoleucine--tRNA ligase">
    <location>
        <begin position="1"/>
        <end position="938"/>
    </location>
</feature>
<feature type="short sequence motif" description="'HIGH' region">
    <location>
        <begin position="58"/>
        <end position="68"/>
    </location>
</feature>
<feature type="short sequence motif" description="'KMSKS' region">
    <location>
        <begin position="602"/>
        <end position="606"/>
    </location>
</feature>
<feature type="binding site" evidence="1">
    <location>
        <position position="561"/>
    </location>
    <ligand>
        <name>L-isoleucyl-5'-AMP</name>
        <dbReference type="ChEBI" id="CHEBI:178002"/>
    </ligand>
</feature>
<feature type="binding site" evidence="1">
    <location>
        <position position="605"/>
    </location>
    <ligand>
        <name>ATP</name>
        <dbReference type="ChEBI" id="CHEBI:30616"/>
    </ligand>
</feature>
<feature type="binding site" evidence="1">
    <location>
        <position position="901"/>
    </location>
    <ligand>
        <name>Zn(2+)</name>
        <dbReference type="ChEBI" id="CHEBI:29105"/>
    </ligand>
</feature>
<feature type="binding site" evidence="1">
    <location>
        <position position="904"/>
    </location>
    <ligand>
        <name>Zn(2+)</name>
        <dbReference type="ChEBI" id="CHEBI:29105"/>
    </ligand>
</feature>
<feature type="binding site" evidence="1">
    <location>
        <position position="921"/>
    </location>
    <ligand>
        <name>Zn(2+)</name>
        <dbReference type="ChEBI" id="CHEBI:29105"/>
    </ligand>
</feature>
<feature type="binding site" evidence="1">
    <location>
        <position position="924"/>
    </location>
    <ligand>
        <name>Zn(2+)</name>
        <dbReference type="ChEBI" id="CHEBI:29105"/>
    </ligand>
</feature>
<organism>
    <name type="scientific">Sodalis glossinidius (strain morsitans)</name>
    <dbReference type="NCBI Taxonomy" id="343509"/>
    <lineage>
        <taxon>Bacteria</taxon>
        <taxon>Pseudomonadati</taxon>
        <taxon>Pseudomonadota</taxon>
        <taxon>Gammaproteobacteria</taxon>
        <taxon>Enterobacterales</taxon>
        <taxon>Bruguierivoracaceae</taxon>
        <taxon>Sodalis</taxon>
    </lineage>
</organism>
<name>SYI_SODGM</name>
<reference key="1">
    <citation type="journal article" date="2006" name="Genome Res.">
        <title>Massive genome erosion and functional adaptations provide insights into the symbiotic lifestyle of Sodalis glossinidius in the tsetse host.</title>
        <authorList>
            <person name="Toh H."/>
            <person name="Weiss B.L."/>
            <person name="Perkin S.A.H."/>
            <person name="Yamashita A."/>
            <person name="Oshima K."/>
            <person name="Hattori M."/>
            <person name="Aksoy S."/>
        </authorList>
    </citation>
    <scope>NUCLEOTIDE SEQUENCE [LARGE SCALE GENOMIC DNA]</scope>
    <source>
        <strain>morsitans</strain>
    </source>
</reference>
<proteinExistence type="inferred from homology"/>
<comment type="function">
    <text evidence="1">Catalyzes the attachment of isoleucine to tRNA(Ile). As IleRS can inadvertently accommodate and process structurally similar amino acids such as valine, to avoid such errors it has two additional distinct tRNA(Ile)-dependent editing activities. One activity is designated as 'pretransfer' editing and involves the hydrolysis of activated Val-AMP. The other activity is designated 'posttransfer' editing and involves deacylation of mischarged Val-tRNA(Ile).</text>
</comment>
<comment type="catalytic activity">
    <reaction evidence="1">
        <text>tRNA(Ile) + L-isoleucine + ATP = L-isoleucyl-tRNA(Ile) + AMP + diphosphate</text>
        <dbReference type="Rhea" id="RHEA:11060"/>
        <dbReference type="Rhea" id="RHEA-COMP:9666"/>
        <dbReference type="Rhea" id="RHEA-COMP:9695"/>
        <dbReference type="ChEBI" id="CHEBI:30616"/>
        <dbReference type="ChEBI" id="CHEBI:33019"/>
        <dbReference type="ChEBI" id="CHEBI:58045"/>
        <dbReference type="ChEBI" id="CHEBI:78442"/>
        <dbReference type="ChEBI" id="CHEBI:78528"/>
        <dbReference type="ChEBI" id="CHEBI:456215"/>
        <dbReference type="EC" id="6.1.1.5"/>
    </reaction>
</comment>
<comment type="cofactor">
    <cofactor evidence="1">
        <name>Zn(2+)</name>
        <dbReference type="ChEBI" id="CHEBI:29105"/>
    </cofactor>
    <text evidence="1">Binds 1 zinc ion per subunit.</text>
</comment>
<comment type="subunit">
    <text evidence="1">Monomer.</text>
</comment>
<comment type="subcellular location">
    <subcellularLocation>
        <location evidence="1">Cytoplasm</location>
    </subcellularLocation>
</comment>
<comment type="domain">
    <text evidence="1">IleRS has two distinct active sites: one for aminoacylation and one for editing. The misactivated valine is translocated from the active site to the editing site, which sterically excludes the correctly activated isoleucine. The single editing site contains two valyl binding pockets, one specific for each substrate (Val-AMP or Val-tRNA(Ile)).</text>
</comment>
<comment type="similarity">
    <text evidence="1">Belongs to the class-I aminoacyl-tRNA synthetase family. IleS type 1 subfamily.</text>
</comment>
<protein>
    <recommendedName>
        <fullName evidence="1">Isoleucine--tRNA ligase</fullName>
        <ecNumber evidence="1">6.1.1.5</ecNumber>
    </recommendedName>
    <alternativeName>
        <fullName evidence="1">Isoleucyl-tRNA synthetase</fullName>
        <shortName evidence="1">IleRS</shortName>
    </alternativeName>
</protein>
<accession>Q2NVY6</accession>
<dbReference type="EC" id="6.1.1.5" evidence="1"/>
<dbReference type="EMBL" id="AP008232">
    <property type="protein sequence ID" value="BAE73689.1"/>
    <property type="molecule type" value="Genomic_DNA"/>
</dbReference>
<dbReference type="RefSeq" id="WP_011410277.1">
    <property type="nucleotide sequence ID" value="NC_007712.1"/>
</dbReference>
<dbReference type="SMR" id="Q2NVY6"/>
<dbReference type="STRING" id="343509.SG0414"/>
<dbReference type="KEGG" id="sgl:SG0414"/>
<dbReference type="eggNOG" id="COG0060">
    <property type="taxonomic scope" value="Bacteria"/>
</dbReference>
<dbReference type="HOGENOM" id="CLU_001493_7_1_6"/>
<dbReference type="OrthoDB" id="9810365at2"/>
<dbReference type="Proteomes" id="UP000001932">
    <property type="component" value="Chromosome"/>
</dbReference>
<dbReference type="GO" id="GO:0005829">
    <property type="term" value="C:cytosol"/>
    <property type="evidence" value="ECO:0007669"/>
    <property type="project" value="TreeGrafter"/>
</dbReference>
<dbReference type="GO" id="GO:0002161">
    <property type="term" value="F:aminoacyl-tRNA deacylase activity"/>
    <property type="evidence" value="ECO:0007669"/>
    <property type="project" value="InterPro"/>
</dbReference>
<dbReference type="GO" id="GO:0005524">
    <property type="term" value="F:ATP binding"/>
    <property type="evidence" value="ECO:0007669"/>
    <property type="project" value="UniProtKB-UniRule"/>
</dbReference>
<dbReference type="GO" id="GO:0004822">
    <property type="term" value="F:isoleucine-tRNA ligase activity"/>
    <property type="evidence" value="ECO:0007669"/>
    <property type="project" value="UniProtKB-UniRule"/>
</dbReference>
<dbReference type="GO" id="GO:0000049">
    <property type="term" value="F:tRNA binding"/>
    <property type="evidence" value="ECO:0007669"/>
    <property type="project" value="InterPro"/>
</dbReference>
<dbReference type="GO" id="GO:0008270">
    <property type="term" value="F:zinc ion binding"/>
    <property type="evidence" value="ECO:0007669"/>
    <property type="project" value="UniProtKB-UniRule"/>
</dbReference>
<dbReference type="GO" id="GO:0006428">
    <property type="term" value="P:isoleucyl-tRNA aminoacylation"/>
    <property type="evidence" value="ECO:0007669"/>
    <property type="project" value="UniProtKB-UniRule"/>
</dbReference>
<dbReference type="CDD" id="cd07960">
    <property type="entry name" value="Anticodon_Ia_Ile_BEm"/>
    <property type="match status" value="1"/>
</dbReference>
<dbReference type="CDD" id="cd00818">
    <property type="entry name" value="IleRS_core"/>
    <property type="match status" value="1"/>
</dbReference>
<dbReference type="FunFam" id="1.10.730.20:FF:000001">
    <property type="entry name" value="Isoleucine--tRNA ligase"/>
    <property type="match status" value="1"/>
</dbReference>
<dbReference type="FunFam" id="3.40.50.620:FF:000042">
    <property type="entry name" value="Isoleucine--tRNA ligase"/>
    <property type="match status" value="1"/>
</dbReference>
<dbReference type="FunFam" id="3.40.50.620:FF:000048">
    <property type="entry name" value="Isoleucine--tRNA ligase"/>
    <property type="match status" value="1"/>
</dbReference>
<dbReference type="FunFam" id="3.90.740.10:FF:000002">
    <property type="entry name" value="Isoleucine--tRNA ligase"/>
    <property type="match status" value="1"/>
</dbReference>
<dbReference type="Gene3D" id="1.10.730.20">
    <property type="match status" value="1"/>
</dbReference>
<dbReference type="Gene3D" id="3.40.50.620">
    <property type="entry name" value="HUPs"/>
    <property type="match status" value="2"/>
</dbReference>
<dbReference type="Gene3D" id="3.90.740.10">
    <property type="entry name" value="Valyl/Leucyl/Isoleucyl-tRNA synthetase, editing domain"/>
    <property type="match status" value="1"/>
</dbReference>
<dbReference type="HAMAP" id="MF_02002">
    <property type="entry name" value="Ile_tRNA_synth_type1"/>
    <property type="match status" value="1"/>
</dbReference>
<dbReference type="InterPro" id="IPR001412">
    <property type="entry name" value="aa-tRNA-synth_I_CS"/>
</dbReference>
<dbReference type="InterPro" id="IPR002300">
    <property type="entry name" value="aa-tRNA-synth_Ia"/>
</dbReference>
<dbReference type="InterPro" id="IPR033708">
    <property type="entry name" value="Anticodon_Ile_BEm"/>
</dbReference>
<dbReference type="InterPro" id="IPR002301">
    <property type="entry name" value="Ile-tRNA-ligase"/>
</dbReference>
<dbReference type="InterPro" id="IPR023585">
    <property type="entry name" value="Ile-tRNA-ligase_type1"/>
</dbReference>
<dbReference type="InterPro" id="IPR050081">
    <property type="entry name" value="Ile-tRNA_ligase"/>
</dbReference>
<dbReference type="InterPro" id="IPR013155">
    <property type="entry name" value="M/V/L/I-tRNA-synth_anticd-bd"/>
</dbReference>
<dbReference type="InterPro" id="IPR014729">
    <property type="entry name" value="Rossmann-like_a/b/a_fold"/>
</dbReference>
<dbReference type="InterPro" id="IPR009080">
    <property type="entry name" value="tRNAsynth_Ia_anticodon-bd"/>
</dbReference>
<dbReference type="InterPro" id="IPR009008">
    <property type="entry name" value="Val/Leu/Ile-tRNA-synth_edit"/>
</dbReference>
<dbReference type="InterPro" id="IPR010663">
    <property type="entry name" value="Znf_FPG/IleRS"/>
</dbReference>
<dbReference type="NCBIfam" id="TIGR00392">
    <property type="entry name" value="ileS"/>
    <property type="match status" value="1"/>
</dbReference>
<dbReference type="PANTHER" id="PTHR42765:SF1">
    <property type="entry name" value="ISOLEUCINE--TRNA LIGASE, MITOCHONDRIAL"/>
    <property type="match status" value="1"/>
</dbReference>
<dbReference type="PANTHER" id="PTHR42765">
    <property type="entry name" value="SOLEUCYL-TRNA SYNTHETASE"/>
    <property type="match status" value="1"/>
</dbReference>
<dbReference type="Pfam" id="PF08264">
    <property type="entry name" value="Anticodon_1"/>
    <property type="match status" value="1"/>
</dbReference>
<dbReference type="Pfam" id="PF00133">
    <property type="entry name" value="tRNA-synt_1"/>
    <property type="match status" value="1"/>
</dbReference>
<dbReference type="Pfam" id="PF06827">
    <property type="entry name" value="zf-FPG_IleRS"/>
    <property type="match status" value="1"/>
</dbReference>
<dbReference type="PRINTS" id="PR00984">
    <property type="entry name" value="TRNASYNTHILE"/>
</dbReference>
<dbReference type="SUPFAM" id="SSF47323">
    <property type="entry name" value="Anticodon-binding domain of a subclass of class I aminoacyl-tRNA synthetases"/>
    <property type="match status" value="1"/>
</dbReference>
<dbReference type="SUPFAM" id="SSF52374">
    <property type="entry name" value="Nucleotidylyl transferase"/>
    <property type="match status" value="1"/>
</dbReference>
<dbReference type="SUPFAM" id="SSF50677">
    <property type="entry name" value="ValRS/IleRS/LeuRS editing domain"/>
    <property type="match status" value="1"/>
</dbReference>
<dbReference type="PROSITE" id="PS00178">
    <property type="entry name" value="AA_TRNA_LIGASE_I"/>
    <property type="match status" value="1"/>
</dbReference>
<sequence>MTDYKNTLNLPDTGFPMRGDLAKREPGMLERWYEQDLYGIICQARKGKKTFILHDGPPYANGSIHIGHSVNKILKDIIIKSKGLMGYDSPYVPGWDCHGLPIELKVEQLIGKPGEKVSAAEFRTACRRYAAEQVEGQKKDFIRLGVLGDWEHPYLTMNFATEANIIRALGKIIANGHLHKGAKPVHWCIDCRSALAEAEVEYYDRTSPSIDVAFAADDVRAVAAKFGAADFAGQISLIIWTTTPWTLPANRAIAVHPDFDYQLVEVEGQGYILAADLVDSVMARAGITCWTVLGSAKGSALELLRFRHPFMGFDVPAILGQHVTLDAGTGAVHTAPGHGPDDYVIGQQYGLEVANPVGPDGCYLPGTLPALDGLQVFKANDVVINLLCDSGALLHVEKLQHSYPHCWRHKTSIIFRATPQWFVSMDQRGLRKQSLAEIKDVQWIPGWGQARIETMVANRPDWCISRQRTWGVPMALFVHNETEALHPRTIELMESVAQRVEQDGIQAWWDLDPAEILGDDAAHYHKVPDTLDVWFDSGSTHSSIVAVRPEFEGHAPDMYLEGSDQHRGWFMSSLMISTAMHGKAPYRQVLTHGFTVDGQGRKMSKSVGNVVSPQQVMDKLGADILRLWVASTDYTGEMAVSDEILKRSADAYRRIRNTARFLLANLNGFDPARHSVSPEQMVVLDRWAVGRAQAAQAEIVAAYDSYDFHNVVQRMMQFCSVEMGSFYLDIIKDRQYTTKADSIARRSCQTALYHIIEALVRWMAPIMSFTADEIWGFMPGERAQYVFTEEWYDGLFGLDAAQPLNDAYWQILLQVRSETNKVIEQARADKRIGGSLEARVTLYAEPDLAASLRELGDELYFTLLTSNAVVADYADAGDDAVQCEGLKGLKIALAKAEGEKCPRCWHYETDIGQHADHPEICGRCVTNVAGPGEERKFV</sequence>